<keyword id="KW-0249">Electron transport</keyword>
<keyword id="KW-0274">FAD</keyword>
<keyword id="KW-0285">Flavoprotein</keyword>
<keyword id="KW-0406">Ion transport</keyword>
<keyword id="KW-0472">Membrane</keyword>
<keyword id="KW-0521">NADP</keyword>
<keyword id="KW-0560">Oxidoreductase</keyword>
<keyword id="KW-1185">Reference proteome</keyword>
<keyword id="KW-0812">Transmembrane</keyword>
<keyword id="KW-1133">Transmembrane helix</keyword>
<keyword id="KW-0813">Transport</keyword>
<name>AIM14_CANTT</name>
<protein>
    <recommendedName>
        <fullName>Probable metalloreductase AIM14</fullName>
        <ecNumber>1.16.1.-</ecNumber>
    </recommendedName>
</protein>
<feature type="chain" id="PRO_0000408742" description="Probable metalloreductase AIM14">
    <location>
        <begin position="1"/>
        <end position="551"/>
    </location>
</feature>
<feature type="transmembrane region" description="Helical" evidence="2">
    <location>
        <begin position="25"/>
        <end position="45"/>
    </location>
</feature>
<feature type="transmembrane region" description="Helical" evidence="2">
    <location>
        <begin position="67"/>
        <end position="87"/>
    </location>
</feature>
<feature type="transmembrane region" description="Helical" evidence="2">
    <location>
        <begin position="100"/>
        <end position="117"/>
    </location>
</feature>
<feature type="transmembrane region" description="Helical" evidence="2">
    <location>
        <begin position="138"/>
        <end position="155"/>
    </location>
</feature>
<feature type="transmembrane region" description="Helical" evidence="2">
    <location>
        <begin position="172"/>
        <end position="192"/>
    </location>
</feature>
<feature type="transmembrane region" description="Helical" evidence="2">
    <location>
        <begin position="199"/>
        <end position="221"/>
    </location>
</feature>
<feature type="transmembrane region" description="Helical" evidence="2">
    <location>
        <begin position="225"/>
        <end position="247"/>
    </location>
</feature>
<feature type="domain" description="Ferric oxidoreductase">
    <location>
        <begin position="102"/>
        <end position="217"/>
    </location>
</feature>
<feature type="domain" description="FAD-binding FR-type">
    <location>
        <begin position="247"/>
        <end position="369"/>
    </location>
</feature>
<feature type="region of interest" description="Disordered" evidence="3">
    <location>
        <begin position="440"/>
        <end position="492"/>
    </location>
</feature>
<feature type="compositionally biased region" description="Basic and acidic residues" evidence="3">
    <location>
        <begin position="472"/>
        <end position="492"/>
    </location>
</feature>
<evidence type="ECO:0000250" key="1"/>
<evidence type="ECO:0000255" key="2"/>
<evidence type="ECO:0000256" key="3">
    <source>
        <dbReference type="SAM" id="MobiDB-lite"/>
    </source>
</evidence>
<evidence type="ECO:0000305" key="4"/>
<comment type="function">
    <text evidence="1">Probable cell surface metalloreductase. May be involved in iron or copper homeostasis (By similarity).</text>
</comment>
<comment type="subcellular location">
    <subcellularLocation>
        <location evidence="1">Membrane</location>
        <topology evidence="1">Multi-pass membrane protein</topology>
    </subcellularLocation>
</comment>
<comment type="similarity">
    <text evidence="4">Belongs to the ferric reductase (FRE) family. AIM14 subfamily.</text>
</comment>
<organism>
    <name type="scientific">Candida tropicalis (strain ATCC MYA-3404 / T1)</name>
    <name type="common">Yeast</name>
    <dbReference type="NCBI Taxonomy" id="294747"/>
    <lineage>
        <taxon>Eukaryota</taxon>
        <taxon>Fungi</taxon>
        <taxon>Dikarya</taxon>
        <taxon>Ascomycota</taxon>
        <taxon>Saccharomycotina</taxon>
        <taxon>Pichiomycetes</taxon>
        <taxon>Debaryomycetaceae</taxon>
        <taxon>Candida/Lodderomyces clade</taxon>
        <taxon>Candida</taxon>
    </lineage>
</organism>
<gene>
    <name type="primary">AIM14</name>
    <name type="ORF">CTRG_01201</name>
</gene>
<dbReference type="EC" id="1.16.1.-"/>
<dbReference type="EMBL" id="GG692396">
    <property type="protein sequence ID" value="EER34341.1"/>
    <property type="molecule type" value="Genomic_DNA"/>
</dbReference>
<dbReference type="RefSeq" id="XP_002546896.1">
    <property type="nucleotide sequence ID" value="XM_002546850.1"/>
</dbReference>
<dbReference type="SMR" id="C5M5S1"/>
<dbReference type="EnsemblFungi" id="CTRG_01201-t43_1">
    <property type="protein sequence ID" value="CTRG_01201-t43_1-p1"/>
    <property type="gene ID" value="CTRG_01201"/>
</dbReference>
<dbReference type="GeneID" id="8297465"/>
<dbReference type="KEGG" id="ctp:CTRG_01201"/>
<dbReference type="VEuPathDB" id="FungiDB:CTRG_01201"/>
<dbReference type="eggNOG" id="KOG0039">
    <property type="taxonomic scope" value="Eukaryota"/>
</dbReference>
<dbReference type="HOGENOM" id="CLU_036508_0_0_1"/>
<dbReference type="OrthoDB" id="17725at2759"/>
<dbReference type="Proteomes" id="UP000002037">
    <property type="component" value="Unassembled WGS sequence"/>
</dbReference>
<dbReference type="GO" id="GO:0005886">
    <property type="term" value="C:plasma membrane"/>
    <property type="evidence" value="ECO:0007669"/>
    <property type="project" value="TreeGrafter"/>
</dbReference>
<dbReference type="GO" id="GO:0000293">
    <property type="term" value="F:ferric-chelate reductase activity"/>
    <property type="evidence" value="ECO:0007669"/>
    <property type="project" value="TreeGrafter"/>
</dbReference>
<dbReference type="GO" id="GO:0033215">
    <property type="term" value="P:reductive iron assimilation"/>
    <property type="evidence" value="ECO:0007669"/>
    <property type="project" value="TreeGrafter"/>
</dbReference>
<dbReference type="CDD" id="cd06186">
    <property type="entry name" value="NOX_Duox_like_FAD_NADP"/>
    <property type="match status" value="1"/>
</dbReference>
<dbReference type="Gene3D" id="3.40.50.80">
    <property type="entry name" value="Nucleotide-binding domain of ferredoxin-NADP reductase (FNR) module"/>
    <property type="match status" value="1"/>
</dbReference>
<dbReference type="InterPro" id="IPR013112">
    <property type="entry name" value="FAD-bd_8"/>
</dbReference>
<dbReference type="InterPro" id="IPR013130">
    <property type="entry name" value="Fe3_Rdtase_TM_dom"/>
</dbReference>
<dbReference type="InterPro" id="IPR013121">
    <property type="entry name" value="Fe_red_NAD-bd_6"/>
</dbReference>
<dbReference type="InterPro" id="IPR039261">
    <property type="entry name" value="FNR_nucleotide-bd"/>
</dbReference>
<dbReference type="InterPro" id="IPR050369">
    <property type="entry name" value="RBOH/FRE"/>
</dbReference>
<dbReference type="PANTHER" id="PTHR11972:SF198">
    <property type="entry name" value="METALLOREDUCTASE AIM14-RELATED"/>
    <property type="match status" value="1"/>
</dbReference>
<dbReference type="PANTHER" id="PTHR11972">
    <property type="entry name" value="NADPH OXIDASE"/>
    <property type="match status" value="1"/>
</dbReference>
<dbReference type="Pfam" id="PF08022">
    <property type="entry name" value="FAD_binding_8"/>
    <property type="match status" value="1"/>
</dbReference>
<dbReference type="Pfam" id="PF01794">
    <property type="entry name" value="Ferric_reduct"/>
    <property type="match status" value="1"/>
</dbReference>
<dbReference type="Pfam" id="PF08030">
    <property type="entry name" value="NAD_binding_6"/>
    <property type="match status" value="1"/>
</dbReference>
<dbReference type="SFLD" id="SFLDF00463">
    <property type="entry name" value="AIM14"/>
    <property type="match status" value="1"/>
</dbReference>
<dbReference type="SFLD" id="SFLDS00052">
    <property type="entry name" value="Ferric_Reductase_Domain"/>
    <property type="match status" value="1"/>
</dbReference>
<dbReference type="SFLD" id="SFLDG01168">
    <property type="entry name" value="Ferric_reductase_subgroup_(FRE"/>
    <property type="match status" value="1"/>
</dbReference>
<dbReference type="SUPFAM" id="SSF52343">
    <property type="entry name" value="Ferredoxin reductase-like, C-terminal NADP-linked domain"/>
    <property type="match status" value="1"/>
</dbReference>
<reference key="1">
    <citation type="journal article" date="2009" name="Nature">
        <title>Evolution of pathogenicity and sexual reproduction in eight Candida genomes.</title>
        <authorList>
            <person name="Butler G."/>
            <person name="Rasmussen M.D."/>
            <person name="Lin M.F."/>
            <person name="Santos M.A.S."/>
            <person name="Sakthikumar S."/>
            <person name="Munro C.A."/>
            <person name="Rheinbay E."/>
            <person name="Grabherr M."/>
            <person name="Forche A."/>
            <person name="Reedy J.L."/>
            <person name="Agrafioti I."/>
            <person name="Arnaud M.B."/>
            <person name="Bates S."/>
            <person name="Brown A.J.P."/>
            <person name="Brunke S."/>
            <person name="Costanzo M.C."/>
            <person name="Fitzpatrick D.A."/>
            <person name="de Groot P.W.J."/>
            <person name="Harris D."/>
            <person name="Hoyer L.L."/>
            <person name="Hube B."/>
            <person name="Klis F.M."/>
            <person name="Kodira C."/>
            <person name="Lennard N."/>
            <person name="Logue M.E."/>
            <person name="Martin R."/>
            <person name="Neiman A.M."/>
            <person name="Nikolaou E."/>
            <person name="Quail M.A."/>
            <person name="Quinn J."/>
            <person name="Santos M.C."/>
            <person name="Schmitzberger F.F."/>
            <person name="Sherlock G."/>
            <person name="Shah P."/>
            <person name="Silverstein K.A.T."/>
            <person name="Skrzypek M.S."/>
            <person name="Soll D."/>
            <person name="Staggs R."/>
            <person name="Stansfield I."/>
            <person name="Stumpf M.P.H."/>
            <person name="Sudbery P.E."/>
            <person name="Srikantha T."/>
            <person name="Zeng Q."/>
            <person name="Berman J."/>
            <person name="Berriman M."/>
            <person name="Heitman J."/>
            <person name="Gow N.A.R."/>
            <person name="Lorenz M.C."/>
            <person name="Birren B.W."/>
            <person name="Kellis M."/>
            <person name="Cuomo C.A."/>
        </authorList>
    </citation>
    <scope>NUCLEOTIDE SEQUENCE [LARGE SCALE GENOMIC DNA]</scope>
    <source>
        <strain>ATCC MYA-3404 / T1</strain>
    </source>
</reference>
<proteinExistence type="inferred from homology"/>
<sequence length="551" mass="63696">MNTISPVVIEPRHGGEHHSVNVKYGIIIFAISVIHILFFLLVKFIEINRWKSNGRFNKSLWKLNNTPTWMLITLWILIIFFIGGANITEFSEEYITIAKRYGRIAYCLLPLNIYLILRPTNCVYLKPGYYLENLSLHKWLSRLISICTLIHAIGYFYKWNKEGKILIKSFRFLNFLGIVVFVMFAVLIIVSIRILRRKYYSLFYIIHNITAWSMVVLIIFHARPGVTIFGIICLILMCYQLLYLRFYKSYPVNNLKIVDIPMSTLQIIKIPKPSNFPTWLPGSHVRLNYTTSNIKSWINSSHPFTIANIPEDGVNYLSLVIKKPGNFIIDQYLTYLLTGPYISIDYPFYNSANLINIICGGSGISFGLPILNHYKSLNSNIPIKLIWCVRNRNDCFIMNQLDMTNVEVFITSAGDSSSDEQSPSSSSYQPVPLFVVDDEQDESHAKVEQTQGEEEVDGLLNQDENGIPLQSMKKESFPKKEEGEDEEKSSKDVFKYGRPKFDEVFAIDDPTLNPNYNDSWVIACGPDQLIEDAKYWSQEKGYRFFSEKYEM</sequence>
<accession>C5M5S1</accession>